<accession>Q2LUQ6</accession>
<protein>
    <recommendedName>
        <fullName evidence="1">Type III pantothenate kinase</fullName>
        <ecNumber evidence="1">2.7.1.33</ecNumber>
    </recommendedName>
    <alternativeName>
        <fullName evidence="1">PanK-III</fullName>
    </alternativeName>
    <alternativeName>
        <fullName evidence="1">Pantothenic acid kinase</fullName>
    </alternativeName>
</protein>
<feature type="chain" id="PRO_0000267595" description="Type III pantothenate kinase">
    <location>
        <begin position="1"/>
        <end position="254"/>
    </location>
</feature>
<feature type="active site" description="Proton acceptor" evidence="1">
    <location>
        <position position="109"/>
    </location>
</feature>
<feature type="binding site" evidence="1">
    <location>
        <begin position="6"/>
        <end position="13"/>
    </location>
    <ligand>
        <name>ATP</name>
        <dbReference type="ChEBI" id="CHEBI:30616"/>
    </ligand>
</feature>
<feature type="binding site" evidence="1">
    <location>
        <position position="100"/>
    </location>
    <ligand>
        <name>substrate</name>
    </ligand>
</feature>
<feature type="binding site" evidence="1">
    <location>
        <begin position="107"/>
        <end position="110"/>
    </location>
    <ligand>
        <name>substrate</name>
    </ligand>
</feature>
<feature type="binding site" evidence="1">
    <location>
        <position position="129"/>
    </location>
    <ligand>
        <name>K(+)</name>
        <dbReference type="ChEBI" id="CHEBI:29103"/>
    </ligand>
</feature>
<feature type="binding site" evidence="1">
    <location>
        <position position="132"/>
    </location>
    <ligand>
        <name>ATP</name>
        <dbReference type="ChEBI" id="CHEBI:30616"/>
    </ligand>
</feature>
<feature type="binding site" evidence="1">
    <location>
        <position position="184"/>
    </location>
    <ligand>
        <name>substrate</name>
    </ligand>
</feature>
<evidence type="ECO:0000255" key="1">
    <source>
        <dbReference type="HAMAP-Rule" id="MF_01274"/>
    </source>
</evidence>
<proteinExistence type="inferred from homology"/>
<gene>
    <name evidence="1" type="primary">coaX</name>
    <name type="ordered locus">SYNAS_19400</name>
    <name type="ORF">SYN_02883</name>
</gene>
<reference key="1">
    <citation type="journal article" date="2007" name="Proc. Natl. Acad. Sci. U.S.A.">
        <title>The genome of Syntrophus aciditrophicus: life at the thermodynamic limit of microbial growth.</title>
        <authorList>
            <person name="McInerney M.J."/>
            <person name="Rohlin L."/>
            <person name="Mouttaki H."/>
            <person name="Kim U."/>
            <person name="Krupp R.S."/>
            <person name="Rios-Hernandez L."/>
            <person name="Sieber J."/>
            <person name="Struchtemeyer C.G."/>
            <person name="Bhattacharyya A."/>
            <person name="Campbell J.W."/>
            <person name="Gunsalus R.P."/>
        </authorList>
    </citation>
    <scope>NUCLEOTIDE SEQUENCE [LARGE SCALE GENOMIC DNA]</scope>
    <source>
        <strain>SB</strain>
    </source>
</reference>
<name>COAX_SYNAS</name>
<sequence>MLLVIDVGNTNTVLGVFDGEELVHDWRIRTVIENTVDEYGMLMYNLYKTSKISSKAIQHIIISCVVPPMLNILEPVCEKYFQVKPLIVGPGIKTGMPIFYDNPKEVGADRIVNAVAVFEKYKREAIVVDFGTATTFDYVSPRGEYMGGCIAPGIVISSEALFTRASKLPRVEFSTPKLIIAKDTVSSMQAGIIYGYAGLVDGIVARMKEEIGSNPLVIATGGLAKVVKPETRSIEMIDDMLTLEGLRLIYKRNS</sequence>
<comment type="function">
    <text evidence="1">Catalyzes the phosphorylation of pantothenate (Pan), the first step in CoA biosynthesis.</text>
</comment>
<comment type="catalytic activity">
    <reaction evidence="1">
        <text>(R)-pantothenate + ATP = (R)-4'-phosphopantothenate + ADP + H(+)</text>
        <dbReference type="Rhea" id="RHEA:16373"/>
        <dbReference type="ChEBI" id="CHEBI:10986"/>
        <dbReference type="ChEBI" id="CHEBI:15378"/>
        <dbReference type="ChEBI" id="CHEBI:29032"/>
        <dbReference type="ChEBI" id="CHEBI:30616"/>
        <dbReference type="ChEBI" id="CHEBI:456216"/>
        <dbReference type="EC" id="2.7.1.33"/>
    </reaction>
</comment>
<comment type="cofactor">
    <cofactor evidence="1">
        <name>NH4(+)</name>
        <dbReference type="ChEBI" id="CHEBI:28938"/>
    </cofactor>
    <cofactor evidence="1">
        <name>K(+)</name>
        <dbReference type="ChEBI" id="CHEBI:29103"/>
    </cofactor>
    <text evidence="1">A monovalent cation. Ammonium or potassium.</text>
</comment>
<comment type="pathway">
    <text evidence="1">Cofactor biosynthesis; coenzyme A biosynthesis; CoA from (R)-pantothenate: step 1/5.</text>
</comment>
<comment type="subunit">
    <text evidence="1">Homodimer.</text>
</comment>
<comment type="subcellular location">
    <subcellularLocation>
        <location evidence="1">Cytoplasm</location>
    </subcellularLocation>
</comment>
<comment type="similarity">
    <text evidence="1">Belongs to the type III pantothenate kinase family.</text>
</comment>
<keyword id="KW-0067">ATP-binding</keyword>
<keyword id="KW-0173">Coenzyme A biosynthesis</keyword>
<keyword id="KW-0963">Cytoplasm</keyword>
<keyword id="KW-0418">Kinase</keyword>
<keyword id="KW-0479">Metal-binding</keyword>
<keyword id="KW-0547">Nucleotide-binding</keyword>
<keyword id="KW-0630">Potassium</keyword>
<keyword id="KW-1185">Reference proteome</keyword>
<keyword id="KW-0808">Transferase</keyword>
<organism>
    <name type="scientific">Syntrophus aciditrophicus (strain SB)</name>
    <dbReference type="NCBI Taxonomy" id="56780"/>
    <lineage>
        <taxon>Bacteria</taxon>
        <taxon>Pseudomonadati</taxon>
        <taxon>Thermodesulfobacteriota</taxon>
        <taxon>Syntrophia</taxon>
        <taxon>Syntrophales</taxon>
        <taxon>Syntrophaceae</taxon>
        <taxon>Syntrophus</taxon>
    </lineage>
</organism>
<dbReference type="EC" id="2.7.1.33" evidence="1"/>
<dbReference type="EMBL" id="CP000252">
    <property type="protein sequence ID" value="ABC77819.1"/>
    <property type="molecule type" value="Genomic_DNA"/>
</dbReference>
<dbReference type="RefSeq" id="WP_011417840.1">
    <property type="nucleotide sequence ID" value="NC_007759.1"/>
</dbReference>
<dbReference type="SMR" id="Q2LUQ6"/>
<dbReference type="STRING" id="56780.SYN_02883"/>
<dbReference type="KEGG" id="sat:SYN_02883"/>
<dbReference type="eggNOG" id="COG1521">
    <property type="taxonomic scope" value="Bacteria"/>
</dbReference>
<dbReference type="HOGENOM" id="CLU_066627_1_0_7"/>
<dbReference type="InParanoid" id="Q2LUQ6"/>
<dbReference type="OrthoDB" id="9804707at2"/>
<dbReference type="UniPathway" id="UPA00241">
    <property type="reaction ID" value="UER00352"/>
</dbReference>
<dbReference type="Proteomes" id="UP000001933">
    <property type="component" value="Chromosome"/>
</dbReference>
<dbReference type="GO" id="GO:0005737">
    <property type="term" value="C:cytoplasm"/>
    <property type="evidence" value="ECO:0007669"/>
    <property type="project" value="UniProtKB-SubCell"/>
</dbReference>
<dbReference type="GO" id="GO:0005524">
    <property type="term" value="F:ATP binding"/>
    <property type="evidence" value="ECO:0007669"/>
    <property type="project" value="UniProtKB-UniRule"/>
</dbReference>
<dbReference type="GO" id="GO:0046872">
    <property type="term" value="F:metal ion binding"/>
    <property type="evidence" value="ECO:0007669"/>
    <property type="project" value="UniProtKB-KW"/>
</dbReference>
<dbReference type="GO" id="GO:0004594">
    <property type="term" value="F:pantothenate kinase activity"/>
    <property type="evidence" value="ECO:0007669"/>
    <property type="project" value="UniProtKB-UniRule"/>
</dbReference>
<dbReference type="GO" id="GO:0015937">
    <property type="term" value="P:coenzyme A biosynthetic process"/>
    <property type="evidence" value="ECO:0007669"/>
    <property type="project" value="UniProtKB-UniRule"/>
</dbReference>
<dbReference type="CDD" id="cd24015">
    <property type="entry name" value="ASKHA_NBD_PanK-III"/>
    <property type="match status" value="1"/>
</dbReference>
<dbReference type="Gene3D" id="3.30.420.40">
    <property type="match status" value="2"/>
</dbReference>
<dbReference type="HAMAP" id="MF_01274">
    <property type="entry name" value="Pantothen_kinase_3"/>
    <property type="match status" value="1"/>
</dbReference>
<dbReference type="InterPro" id="IPR043129">
    <property type="entry name" value="ATPase_NBD"/>
</dbReference>
<dbReference type="InterPro" id="IPR004619">
    <property type="entry name" value="Type_III_PanK"/>
</dbReference>
<dbReference type="NCBIfam" id="TIGR00671">
    <property type="entry name" value="baf"/>
    <property type="match status" value="1"/>
</dbReference>
<dbReference type="NCBIfam" id="NF009848">
    <property type="entry name" value="PRK13318.1-6"/>
    <property type="match status" value="1"/>
</dbReference>
<dbReference type="NCBIfam" id="NF009855">
    <property type="entry name" value="PRK13321.1"/>
    <property type="match status" value="1"/>
</dbReference>
<dbReference type="PANTHER" id="PTHR34265">
    <property type="entry name" value="TYPE III PANTOTHENATE KINASE"/>
    <property type="match status" value="1"/>
</dbReference>
<dbReference type="PANTHER" id="PTHR34265:SF1">
    <property type="entry name" value="TYPE III PANTOTHENATE KINASE"/>
    <property type="match status" value="1"/>
</dbReference>
<dbReference type="Pfam" id="PF03309">
    <property type="entry name" value="Pan_kinase"/>
    <property type="match status" value="1"/>
</dbReference>
<dbReference type="SUPFAM" id="SSF53067">
    <property type="entry name" value="Actin-like ATPase domain"/>
    <property type="match status" value="2"/>
</dbReference>